<name>BPHC_METFU</name>
<accession>P08695</accession>
<reference key="1">
    <citation type="journal article" date="1987" name="J. Bacteriol.">
        <title>Nucleotide sequence of the 2,3-dihydroxybiphenyl dioxygenase gene of Pseudomonas pseudoalcaligenes.</title>
        <authorList>
            <person name="Furukawa K."/>
            <person name="Arimura N."/>
            <person name="Miyazaki T."/>
        </authorList>
    </citation>
    <scope>NUCLEOTIDE SEQUENCE [GENOMIC DNA]</scope>
    <source>
        <strain>DSM 10086 / NBRC 110670 / KF707</strain>
    </source>
</reference>
<proteinExistence type="inferred from homology"/>
<gene>
    <name type="primary">bphC</name>
</gene>
<organism>
    <name type="scientific">Metapseudomonas furukawaii</name>
    <name type="common">Pseudomonas furukawaii</name>
    <dbReference type="NCBI Taxonomy" id="1149133"/>
    <lineage>
        <taxon>Bacteria</taxon>
        <taxon>Pseudomonadati</taxon>
        <taxon>Pseudomonadota</taxon>
        <taxon>Gammaproteobacteria</taxon>
        <taxon>Pseudomonadales</taxon>
        <taxon>Pseudomonadaceae</taxon>
        <taxon>Metapseudomonas</taxon>
    </lineage>
</organism>
<feature type="initiator methionine" description="Removed">
    <location>
        <position position="1"/>
    </location>
</feature>
<feature type="chain" id="PRO_0000085034" description="Biphenyl-2,3-diol 1,2-dioxygenase">
    <location>
        <begin position="2"/>
        <end position="303"/>
    </location>
</feature>
<feature type="domain" description="VOC 1" evidence="2">
    <location>
        <begin position="5"/>
        <end position="119"/>
    </location>
</feature>
<feature type="domain" description="VOC 2" evidence="2">
    <location>
        <begin position="143"/>
        <end position="264"/>
    </location>
</feature>
<feature type="region of interest" description="Disordered" evidence="3">
    <location>
        <begin position="283"/>
        <end position="303"/>
    </location>
</feature>
<feature type="compositionally biased region" description="Basic and acidic residues" evidence="3">
    <location>
        <begin position="287"/>
        <end position="303"/>
    </location>
</feature>
<feature type="binding site" evidence="1">
    <location>
        <position position="146"/>
    </location>
    <ligand>
        <name>Fe cation</name>
        <dbReference type="ChEBI" id="CHEBI:24875"/>
    </ligand>
</feature>
<feature type="binding site" evidence="1">
    <location>
        <position position="210"/>
    </location>
    <ligand>
        <name>Fe cation</name>
        <dbReference type="ChEBI" id="CHEBI:24875"/>
    </ligand>
</feature>
<feature type="binding site" evidence="1">
    <location>
        <position position="260"/>
    </location>
    <ligand>
        <name>Fe cation</name>
        <dbReference type="ChEBI" id="CHEBI:24875"/>
    </ligand>
</feature>
<keyword id="KW-0058">Aromatic hydrocarbons catabolism</keyword>
<keyword id="KW-0223">Dioxygenase</keyword>
<keyword id="KW-0408">Iron</keyword>
<keyword id="KW-0479">Metal-binding</keyword>
<keyword id="KW-0560">Oxidoreductase</keyword>
<keyword id="KW-0677">Repeat</keyword>
<evidence type="ECO:0000250" key="1"/>
<evidence type="ECO:0000255" key="2">
    <source>
        <dbReference type="PROSITE-ProRule" id="PRU01163"/>
    </source>
</evidence>
<evidence type="ECO:0000256" key="3">
    <source>
        <dbReference type="SAM" id="MobiDB-lite"/>
    </source>
</evidence>
<evidence type="ECO:0000305" key="4"/>
<protein>
    <recommendedName>
        <fullName>Biphenyl-2,3-diol 1,2-dioxygenase</fullName>
        <ecNumber>1.13.11.39</ecNumber>
    </recommendedName>
    <alternativeName>
        <fullName>2,3-dihydroxybiphenyl dioxygenase</fullName>
        <shortName>DHBD</shortName>
    </alternativeName>
    <alternativeName>
        <fullName>23OHBP oxygenase</fullName>
    </alternativeName>
</protein>
<comment type="catalytic activity">
    <reaction>
        <text>biphenyl-2,3-diol + O2 = 2-hydroxy-6-oxo-6-phenylhexa-2,4-dienoate + H(+)</text>
        <dbReference type="Rhea" id="RHEA:14413"/>
        <dbReference type="ChEBI" id="CHEBI:15378"/>
        <dbReference type="ChEBI" id="CHEBI:15379"/>
        <dbReference type="ChEBI" id="CHEBI:16205"/>
        <dbReference type="ChEBI" id="CHEBI:58284"/>
        <dbReference type="EC" id="1.13.11.39"/>
    </reaction>
</comment>
<comment type="cofactor">
    <cofactor>
        <name>Fe(2+)</name>
        <dbReference type="ChEBI" id="CHEBI:29033"/>
    </cofactor>
</comment>
<comment type="pathway">
    <text>Xenobiotic degradation; biphenyl degradation; 2-hydroxy-2,4-pentadienoate and benzoate from biphenyl: step 3/4.</text>
</comment>
<comment type="subunit">
    <text>Homooctamer.</text>
</comment>
<comment type="similarity">
    <text evidence="4">Belongs to the extradiol ring-cleavage dioxygenase family.</text>
</comment>
<dbReference type="EC" id="1.13.11.39"/>
<dbReference type="EMBL" id="M15333">
    <property type="protein sequence ID" value="AAA25753.1"/>
    <property type="molecule type" value="Genomic_DNA"/>
</dbReference>
<dbReference type="SMR" id="P08695"/>
<dbReference type="STRING" id="1149133.ppKF707_3400"/>
<dbReference type="UniPathway" id="UPA00155">
    <property type="reaction ID" value="UER00252"/>
</dbReference>
<dbReference type="GO" id="GO:0018583">
    <property type="term" value="F:biphenyl-2,3-diol 1,2-dioxygenase activity"/>
    <property type="evidence" value="ECO:0007669"/>
    <property type="project" value="UniProtKB-EC"/>
</dbReference>
<dbReference type="GO" id="GO:0008198">
    <property type="term" value="F:ferrous iron binding"/>
    <property type="evidence" value="ECO:0007669"/>
    <property type="project" value="InterPro"/>
</dbReference>
<dbReference type="GO" id="GO:0042178">
    <property type="term" value="P:xenobiotic catabolic process"/>
    <property type="evidence" value="ECO:0007669"/>
    <property type="project" value="InterPro"/>
</dbReference>
<dbReference type="CDD" id="cd07237">
    <property type="entry name" value="BphC1-RGP6_C_like"/>
    <property type="match status" value="1"/>
</dbReference>
<dbReference type="CDD" id="cd07252">
    <property type="entry name" value="BphC1-RGP6_N_like"/>
    <property type="match status" value="1"/>
</dbReference>
<dbReference type="Gene3D" id="3.10.180.10">
    <property type="entry name" value="2,3-Dihydroxybiphenyl 1,2-Dioxygenase, domain 1"/>
    <property type="match status" value="2"/>
</dbReference>
<dbReference type="InterPro" id="IPR017626">
    <property type="entry name" value="DiOHbiphenyl_dOase"/>
</dbReference>
<dbReference type="InterPro" id="IPR029068">
    <property type="entry name" value="Glyas_Bleomycin-R_OHBP_Dase"/>
</dbReference>
<dbReference type="InterPro" id="IPR004360">
    <property type="entry name" value="Glyas_Fos-R_dOase_dom"/>
</dbReference>
<dbReference type="InterPro" id="IPR037523">
    <property type="entry name" value="VOC"/>
</dbReference>
<dbReference type="InterPro" id="IPR000486">
    <property type="entry name" value="Xdiol_ring_cleave_dOase_1/2"/>
</dbReference>
<dbReference type="NCBIfam" id="TIGR03213">
    <property type="entry name" value="23dbph12diox"/>
    <property type="match status" value="1"/>
</dbReference>
<dbReference type="Pfam" id="PF22632">
    <property type="entry name" value="BphC_D1"/>
    <property type="match status" value="1"/>
</dbReference>
<dbReference type="Pfam" id="PF00903">
    <property type="entry name" value="Glyoxalase"/>
    <property type="match status" value="1"/>
</dbReference>
<dbReference type="SUPFAM" id="SSF54593">
    <property type="entry name" value="Glyoxalase/Bleomycin resistance protein/Dihydroxybiphenyl dioxygenase"/>
    <property type="match status" value="2"/>
</dbReference>
<dbReference type="PROSITE" id="PS00082">
    <property type="entry name" value="EXTRADIOL_DIOXYGENAS"/>
    <property type="match status" value="1"/>
</dbReference>
<dbReference type="PROSITE" id="PS51819">
    <property type="entry name" value="VOC"/>
    <property type="match status" value="2"/>
</dbReference>
<sequence>MSIRSLGYMGFAVSDVAAWRSFLTQKLGLMEAGTTDNGDLFRIDSRAWRIAVQQGEVDDLAFAGYEVADAAGLAQMADKLKQAGIAVTTGDASLARRRGVTGLITFADPFGLPLEIYYGASEVFEKPFLPGAAVSGFLTGEQGLGHFVRCVPDSDKALAFYTDVLGFQLSDVIDMKMGPDVTVPVYFLHCNERHHTLAIAAFPLPKRIHHFMLEVASLDDVGFAFDRVDADGLITSTLGRHTNDHMVSFYASTPSGVEVEYGWSARTVDRSWVVVRHDSPSMWGHKSVRDKALRATKHEQQPE</sequence>